<sequence length="1353" mass="150528">MSSPMPDCTSKCRSLKHALDVLSVVTKGSENQIKAFLSSHCYNAATIKDVFGRNALHLVSSCGKKGVLDWLIQKGVDLLVKDKESGWTALHRSIFYGHIDCVWSLLKHGVSLYIQDKEGLSALDLVMKDRPTHVVFKNTDPTDVYTWGDNTNFTLGHGSQNSKHHPELVDLFSRSGIYIKQVVLCKFHSVFLSQKGQVYTCGHGPGGRLGHGDEQTCLVPRLVEGLNGHNCSQVAAAKDHTVVLTEDGCVYTFGLNIFHQLGIIPPPSSCNVPRQIQAKYLKGRTIIGVAAGRFHTVLWTREAVYTMGLNGGQLGCLLDPNGEKCVTAPRQVSALHHKDIALSLVAASDGATVCVTTRGDIYLLADYQCKKMASKQLNLKKVLVSGGHMEYKVDPEHLKENGGQKICILAMDGAGRVFCWRSVNSSLKQCRWAYPRQVFISDIALNRNEILFVTQDGEGFRGRWFEEKRKSSEKKEILSNLHNSSSDVSYVSDINSVYERIRLEKLTFAHRAVSVSTDPSGCNFAILQSDPKTSLYEIPAVSSSSFFEEFGKLLREADEMDSIHDVTFQVGNRLFPAHKYILAVHSDFFQKLFLSDGNTSEFTDIYQKDEDSAGCHLFVVEKVHPDMFEYLLQFIYTDTCDFLTHGFKPRIHLNKNPEEYQGTLNSHLNKVNFHEDDNQKSAFEVYKSNQAQTVSERQKSKPKSCKKGKNIREDDPVRMLQTVAKKFDFSNLSSRLDGVRFENEKINVIAKNTGNKLKLSQKKCSFLCDVTMKSVDGKEFPCHKCVLCARLEYFHSMLSSSWIEASSCAALEMPIHSDILKVILDYLYTDEAVVIKESQNVDFICSVLVVADQLLITRLKEICEVALTEKLTLKNAAMLLEFAAMYSAKQLKLSCLQFIGLNMAALLEARSLDVLSDGVLKDLSEFYRKMIPAMDRRVITPYQDGPDISYLEVEDGDIFLKEEINMEQNHSETMFKKAKTKAKKKPRKRSDSSGGYNLSDIIQSPSSTGLLKSGKTNSVESLPELLTSDSEGSYAGVGSPRDLQSPDFTTGFHSDKIEAKVKPYVNGTSPVYSREDLKPWEKSPILKISAPQPIPSNRIDTTSSASWVAGSFSPVSPPVVDLRTIMEIEESRQKCGATPKSHLGKTVSHGVKLSQKQRKMIALTTKENNSGMNSMETVLFTPSKAPKPVNAWASSLHSVSSKSFRDFLLEEKKSVTSHSSGDHVKKVSFKGIENSQAPKIVRCSTHGTPGPEGNHISDLPLLDSPNPWLSSSVTAPSMVAPVTFASIVEEELQQEAALIRSREKPLALIQIEEHAIQDLLVFYEAFGNPEEFVIVERTPQGPLAVPMWNKHGC</sequence>
<accession>Q9P2D0</accession>
<accession>Q2QKU2</accession>
<accession>Q2QKU3</accession>
<accession>Q2QKU4</accession>
<accession>Q5TFD7</accession>
<accession>Q5TFD9</accession>
<accession>Q8IUQ9</accession>
<accession>Q8IUY7</accession>
<accession>Q8TAI4</accession>
<accession>Q9HBI8</accession>
<accession>Q9Y3T8</accession>
<keyword id="KW-0025">Alternative splicing</keyword>
<keyword id="KW-0040">ANK repeat</keyword>
<keyword id="KW-0963">Cytoplasm</keyword>
<keyword id="KW-0472">Membrane</keyword>
<keyword id="KW-0539">Nucleus</keyword>
<keyword id="KW-0597">Phosphoprotein</keyword>
<keyword id="KW-1267">Proteomics identification</keyword>
<keyword id="KW-1185">Reference proteome</keyword>
<keyword id="KW-0677">Repeat</keyword>
<proteinExistence type="evidence at protein level"/>
<reference key="1">
    <citation type="journal article" date="2008" name="Nucleic Acids Res.">
        <title>Physical and functional characterization of the genetic locus of IBtk, an inhibitor of Bruton's tyrosine kinase: evidence for three protein isoforms of IBtk.</title>
        <authorList>
            <person name="Spatuzza C."/>
            <person name="Schiavone M."/>
            <person name="Di Salle E."/>
            <person name="Janda E."/>
            <person name="Sardiello M."/>
            <person name="Fiume G."/>
            <person name="Fierro O."/>
            <person name="Simonetta M."/>
            <person name="Argiriou N."/>
            <person name="Faraonio R."/>
            <person name="Capparelli R."/>
            <person name="Quinto I."/>
            <person name="Scala G."/>
        </authorList>
    </citation>
    <scope>NUCLEOTIDE SEQUENCE [MRNA] (ISOFORMS 1; 2 AND 3)</scope>
    <scope>ALTERNATIVE SPLICING</scope>
    <scope>INTERACTION WITH BTK</scope>
    <scope>SUBCELLULAR LOCATION</scope>
    <scope>TISSUE SPECIFICITY</scope>
</reference>
<reference key="2">
    <citation type="journal article" date="2000" name="DNA Res.">
        <title>Prediction of the coding sequences of unidentified human genes. XVI. The complete sequences of 150 new cDNA clones from brain which code for large proteins in vitro.</title>
        <authorList>
            <person name="Nagase T."/>
            <person name="Kikuno R."/>
            <person name="Ishikawa K."/>
            <person name="Hirosawa M."/>
            <person name="Ohara O."/>
        </authorList>
    </citation>
    <scope>NUCLEOTIDE SEQUENCE [LARGE SCALE MRNA] (ISOFORM 1)</scope>
    <source>
        <tissue>Brain</tissue>
    </source>
</reference>
<reference key="3">
    <citation type="journal article" date="2002" name="DNA Res.">
        <title>Construction of expression-ready cDNA clones for KIAA genes: manual curation of 330 KIAA cDNA clones.</title>
        <authorList>
            <person name="Nakajima D."/>
            <person name="Okazaki N."/>
            <person name="Yamakawa H."/>
            <person name="Kikuno R."/>
            <person name="Ohara O."/>
            <person name="Nagase T."/>
        </authorList>
    </citation>
    <scope>SEQUENCE REVISION</scope>
</reference>
<reference key="4">
    <citation type="journal article" date="2003" name="Nature">
        <title>The DNA sequence and analysis of human chromosome 6.</title>
        <authorList>
            <person name="Mungall A.J."/>
            <person name="Palmer S.A."/>
            <person name="Sims S.K."/>
            <person name="Edwards C.A."/>
            <person name="Ashurst J.L."/>
            <person name="Wilming L."/>
            <person name="Jones M.C."/>
            <person name="Horton R."/>
            <person name="Hunt S.E."/>
            <person name="Scott C.E."/>
            <person name="Gilbert J.G.R."/>
            <person name="Clamp M.E."/>
            <person name="Bethel G."/>
            <person name="Milne S."/>
            <person name="Ainscough R."/>
            <person name="Almeida J.P."/>
            <person name="Ambrose K.D."/>
            <person name="Andrews T.D."/>
            <person name="Ashwell R.I.S."/>
            <person name="Babbage A.K."/>
            <person name="Bagguley C.L."/>
            <person name="Bailey J."/>
            <person name="Banerjee R."/>
            <person name="Barker D.J."/>
            <person name="Barlow K.F."/>
            <person name="Bates K."/>
            <person name="Beare D.M."/>
            <person name="Beasley H."/>
            <person name="Beasley O."/>
            <person name="Bird C.P."/>
            <person name="Blakey S.E."/>
            <person name="Bray-Allen S."/>
            <person name="Brook J."/>
            <person name="Brown A.J."/>
            <person name="Brown J.Y."/>
            <person name="Burford D.C."/>
            <person name="Burrill W."/>
            <person name="Burton J."/>
            <person name="Carder C."/>
            <person name="Carter N.P."/>
            <person name="Chapman J.C."/>
            <person name="Clark S.Y."/>
            <person name="Clark G."/>
            <person name="Clee C.M."/>
            <person name="Clegg S."/>
            <person name="Cobley V."/>
            <person name="Collier R.E."/>
            <person name="Collins J.E."/>
            <person name="Colman L.K."/>
            <person name="Corby N.R."/>
            <person name="Coville G.J."/>
            <person name="Culley K.M."/>
            <person name="Dhami P."/>
            <person name="Davies J."/>
            <person name="Dunn M."/>
            <person name="Earthrowl M.E."/>
            <person name="Ellington A.E."/>
            <person name="Evans K.A."/>
            <person name="Faulkner L."/>
            <person name="Francis M.D."/>
            <person name="Frankish A."/>
            <person name="Frankland J."/>
            <person name="French L."/>
            <person name="Garner P."/>
            <person name="Garnett J."/>
            <person name="Ghori M.J."/>
            <person name="Gilby L.M."/>
            <person name="Gillson C.J."/>
            <person name="Glithero R.J."/>
            <person name="Grafham D.V."/>
            <person name="Grant M."/>
            <person name="Gribble S."/>
            <person name="Griffiths C."/>
            <person name="Griffiths M.N.D."/>
            <person name="Hall R."/>
            <person name="Halls K.S."/>
            <person name="Hammond S."/>
            <person name="Harley J.L."/>
            <person name="Hart E.A."/>
            <person name="Heath P.D."/>
            <person name="Heathcott R."/>
            <person name="Holmes S.J."/>
            <person name="Howden P.J."/>
            <person name="Howe K.L."/>
            <person name="Howell G.R."/>
            <person name="Huckle E."/>
            <person name="Humphray S.J."/>
            <person name="Humphries M.D."/>
            <person name="Hunt A.R."/>
            <person name="Johnson C.M."/>
            <person name="Joy A.A."/>
            <person name="Kay M."/>
            <person name="Keenan S.J."/>
            <person name="Kimberley A.M."/>
            <person name="King A."/>
            <person name="Laird G.K."/>
            <person name="Langford C."/>
            <person name="Lawlor S."/>
            <person name="Leongamornlert D.A."/>
            <person name="Leversha M."/>
            <person name="Lloyd C.R."/>
            <person name="Lloyd D.M."/>
            <person name="Loveland J.E."/>
            <person name="Lovell J."/>
            <person name="Martin S."/>
            <person name="Mashreghi-Mohammadi M."/>
            <person name="Maslen G.L."/>
            <person name="Matthews L."/>
            <person name="McCann O.T."/>
            <person name="McLaren S.J."/>
            <person name="McLay K."/>
            <person name="McMurray A."/>
            <person name="Moore M.J.F."/>
            <person name="Mullikin J.C."/>
            <person name="Niblett D."/>
            <person name="Nickerson T."/>
            <person name="Novik K.L."/>
            <person name="Oliver K."/>
            <person name="Overton-Larty E.K."/>
            <person name="Parker A."/>
            <person name="Patel R."/>
            <person name="Pearce A.V."/>
            <person name="Peck A.I."/>
            <person name="Phillimore B.J.C.T."/>
            <person name="Phillips S."/>
            <person name="Plumb R.W."/>
            <person name="Porter K.M."/>
            <person name="Ramsey Y."/>
            <person name="Ranby S.A."/>
            <person name="Rice C.M."/>
            <person name="Ross M.T."/>
            <person name="Searle S.M."/>
            <person name="Sehra H.K."/>
            <person name="Sheridan E."/>
            <person name="Skuce C.D."/>
            <person name="Smith S."/>
            <person name="Smith M."/>
            <person name="Spraggon L."/>
            <person name="Squares S.L."/>
            <person name="Steward C.A."/>
            <person name="Sycamore N."/>
            <person name="Tamlyn-Hall G."/>
            <person name="Tester J."/>
            <person name="Theaker A.J."/>
            <person name="Thomas D.W."/>
            <person name="Thorpe A."/>
            <person name="Tracey A."/>
            <person name="Tromans A."/>
            <person name="Tubby B."/>
            <person name="Wall M."/>
            <person name="Wallis J.M."/>
            <person name="West A.P."/>
            <person name="White S.S."/>
            <person name="Whitehead S.L."/>
            <person name="Whittaker H."/>
            <person name="Wild A."/>
            <person name="Willey D.J."/>
            <person name="Wilmer T.E."/>
            <person name="Wood J.M."/>
            <person name="Wray P.W."/>
            <person name="Wyatt J.C."/>
            <person name="Young L."/>
            <person name="Younger R.M."/>
            <person name="Bentley D.R."/>
            <person name="Coulson A."/>
            <person name="Durbin R.M."/>
            <person name="Hubbard T."/>
            <person name="Sulston J.E."/>
            <person name="Dunham I."/>
            <person name="Rogers J."/>
            <person name="Beck S."/>
        </authorList>
    </citation>
    <scope>NUCLEOTIDE SEQUENCE [LARGE SCALE GENOMIC DNA]</scope>
</reference>
<reference key="5">
    <citation type="journal article" date="2004" name="Genome Res.">
        <title>The status, quality, and expansion of the NIH full-length cDNA project: the Mammalian Gene Collection (MGC).</title>
        <authorList>
            <consortium name="The MGC Project Team"/>
        </authorList>
    </citation>
    <scope>NUCLEOTIDE SEQUENCE [LARGE SCALE MRNA] (ISOFORM 1)</scope>
    <scope>VARIANT VAL-1185</scope>
    <source>
        <tissue>Brain</tissue>
        <tissue>Skin</tissue>
    </source>
</reference>
<reference key="6">
    <citation type="journal article" date="2007" name="BMC Genomics">
        <title>The full-ORF clone resource of the German cDNA consortium.</title>
        <authorList>
            <person name="Bechtel S."/>
            <person name="Rosenfelder H."/>
            <person name="Duda A."/>
            <person name="Schmidt C.P."/>
            <person name="Ernst U."/>
            <person name="Wellenreuther R."/>
            <person name="Mehrle A."/>
            <person name="Schuster C."/>
            <person name="Bahr A."/>
            <person name="Bloecker H."/>
            <person name="Heubner D."/>
            <person name="Hoerlein A."/>
            <person name="Michel G."/>
            <person name="Wedler H."/>
            <person name="Koehrer K."/>
            <person name="Ottenwaelder B."/>
            <person name="Poustka A."/>
            <person name="Wiemann S."/>
            <person name="Schupp I."/>
        </authorList>
    </citation>
    <scope>NUCLEOTIDE SEQUENCE [LARGE SCALE MRNA] OF 971-1353 (ISOFORM 1)</scope>
    <source>
        <tissue>Brain</tissue>
    </source>
</reference>
<reference key="7">
    <citation type="journal article" date="2001" name="Nat. Immunol.">
        <title>Direct inhibition of Bruton's tyrosine kinase by IBtk, a Btk-binding protein.</title>
        <authorList>
            <person name="Liu W."/>
            <person name="Quinto I."/>
            <person name="Chen X."/>
            <person name="Palmieri C."/>
            <person name="Rabin R.L."/>
            <person name="Schwartz O.M."/>
            <person name="Nelson D.L."/>
            <person name="Scala G."/>
        </authorList>
    </citation>
    <scope>NUCLEOTIDE SEQUENCE [MRNA] OF 1159-1353 (ISOFORMS 1/3)</scope>
    <scope>FUNCTION</scope>
    <scope>SUBCELLULAR LOCATION</scope>
    <scope>TISSUE SPECIFICITY</scope>
    <scope>INTERACTION WITH BTK</scope>
    <scope>VARIANT VAL-1185</scope>
    <source>
        <tissue>B-cell</tissue>
    </source>
</reference>
<reference key="8">
    <citation type="journal article" date="2008" name="Proc. Natl. Acad. Sci. U.S.A.">
        <title>A quantitative atlas of mitotic phosphorylation.</title>
        <authorList>
            <person name="Dephoure N."/>
            <person name="Zhou C."/>
            <person name="Villen J."/>
            <person name="Beausoleil S.A."/>
            <person name="Bakalarski C.E."/>
            <person name="Elledge S.J."/>
            <person name="Gygi S.P."/>
        </authorList>
    </citation>
    <scope>PHOSPHORYLATION [LARGE SCALE ANALYSIS] AT SER-990; SER-1004; SER-1045 AND SER-1054</scope>
    <scope>IDENTIFICATION BY MASS SPECTROMETRY [LARGE SCALE ANALYSIS]</scope>
    <source>
        <tissue>Cervix carcinoma</tissue>
    </source>
</reference>
<reference key="9">
    <citation type="journal article" date="2009" name="Sci. Signal.">
        <title>Quantitative phosphoproteomic analysis of T cell receptor signaling reveals system-wide modulation of protein-protein interactions.</title>
        <authorList>
            <person name="Mayya V."/>
            <person name="Lundgren D.H."/>
            <person name="Hwang S.-I."/>
            <person name="Rezaul K."/>
            <person name="Wu L."/>
            <person name="Eng J.K."/>
            <person name="Rodionov V."/>
            <person name="Han D.K."/>
        </authorList>
    </citation>
    <scope>IDENTIFICATION BY MASS SPECTROMETRY [LARGE SCALE ANALYSIS]</scope>
    <source>
        <tissue>Leukemic T-cell</tissue>
    </source>
</reference>
<reference key="10">
    <citation type="journal article" date="2010" name="Sci. Signal.">
        <title>Quantitative phosphoproteomics reveals widespread full phosphorylation site occupancy during mitosis.</title>
        <authorList>
            <person name="Olsen J.V."/>
            <person name="Vermeulen M."/>
            <person name="Santamaria A."/>
            <person name="Kumar C."/>
            <person name="Miller M.L."/>
            <person name="Jensen L.J."/>
            <person name="Gnad F."/>
            <person name="Cox J."/>
            <person name="Jensen T.S."/>
            <person name="Nigg E.A."/>
            <person name="Brunak S."/>
            <person name="Mann M."/>
        </authorList>
    </citation>
    <scope>PHOSPHORYLATION [LARGE SCALE ANALYSIS] AT SER-1045; SER-1113 AND SER-1116</scope>
    <scope>IDENTIFICATION BY MASS SPECTROMETRY [LARGE SCALE ANALYSIS]</scope>
    <source>
        <tissue>Cervix carcinoma</tissue>
    </source>
</reference>
<reference key="11">
    <citation type="journal article" date="2011" name="Sci. Signal.">
        <title>System-wide temporal characterization of the proteome and phosphoproteome of human embryonic stem cell differentiation.</title>
        <authorList>
            <person name="Rigbolt K.T."/>
            <person name="Prokhorova T.A."/>
            <person name="Akimov V."/>
            <person name="Henningsen J."/>
            <person name="Johansen P.T."/>
            <person name="Kratchmarova I."/>
            <person name="Kassem M."/>
            <person name="Mann M."/>
            <person name="Olsen J.V."/>
            <person name="Blagoev B."/>
        </authorList>
    </citation>
    <scope>PHOSPHORYLATION [LARGE SCALE ANALYSIS] AT SER-1045</scope>
    <scope>IDENTIFICATION BY MASS SPECTROMETRY [LARGE SCALE ANALYSIS]</scope>
</reference>
<reference key="12">
    <citation type="journal article" date="2013" name="J. Proteome Res.">
        <title>Toward a comprehensive characterization of a human cancer cell phosphoproteome.</title>
        <authorList>
            <person name="Zhou H."/>
            <person name="Di Palma S."/>
            <person name="Preisinger C."/>
            <person name="Peng M."/>
            <person name="Polat A.N."/>
            <person name="Heck A.J."/>
            <person name="Mohammed S."/>
        </authorList>
    </citation>
    <scope>PHOSPHORYLATION [LARGE SCALE ANALYSIS] AT SER-1045 AND SER-1083</scope>
    <scope>IDENTIFICATION BY MASS SPECTROMETRY [LARGE SCALE ANALYSIS]</scope>
    <source>
        <tissue>Cervix carcinoma</tissue>
        <tissue>Erythroleukemia</tissue>
    </source>
</reference>
<reference key="13">
    <citation type="journal article" date="2014" name="J. Proteomics">
        <title>An enzyme assisted RP-RPLC approach for in-depth analysis of human liver phosphoproteome.</title>
        <authorList>
            <person name="Bian Y."/>
            <person name="Song C."/>
            <person name="Cheng K."/>
            <person name="Dong M."/>
            <person name="Wang F."/>
            <person name="Huang J."/>
            <person name="Sun D."/>
            <person name="Wang L."/>
            <person name="Ye M."/>
            <person name="Zou H."/>
        </authorList>
    </citation>
    <scope>PHOSPHORYLATION [LARGE SCALE ANALYSIS] AT SER-1030; SER-1033; SER-1039 AND SER-1045</scope>
    <scope>IDENTIFICATION BY MASS SPECTROMETRY [LARGE SCALE ANALYSIS]</scope>
    <source>
        <tissue>Liver</tissue>
    </source>
</reference>
<feature type="chain" id="PRO_0000280276" description="Inhibitor of Bruton tyrosine kinase">
    <location>
        <begin position="1"/>
        <end position="1353"/>
    </location>
</feature>
<feature type="repeat" description="ANK 1">
    <location>
        <begin position="51"/>
        <end position="80"/>
    </location>
</feature>
<feature type="repeat" description="ANK 2">
    <location>
        <begin position="85"/>
        <end position="114"/>
    </location>
</feature>
<feature type="repeat" description="RCC1 1">
    <location>
        <begin position="141"/>
        <end position="194"/>
    </location>
</feature>
<feature type="repeat" description="RCC1 2">
    <location>
        <begin position="195"/>
        <end position="246"/>
    </location>
</feature>
<feature type="repeat" description="RCC1 3">
    <location>
        <begin position="248"/>
        <end position="301"/>
    </location>
</feature>
<feature type="domain" description="BTB 1" evidence="2">
    <location>
        <begin position="564"/>
        <end position="644"/>
    </location>
</feature>
<feature type="domain" description="BTB 2" evidence="2">
    <location>
        <begin position="768"/>
        <end position="836"/>
    </location>
</feature>
<feature type="repeat" description="ANK 3">
    <location>
        <begin position="806"/>
        <end position="835"/>
    </location>
</feature>
<feature type="region of interest" description="Disordered" evidence="3">
    <location>
        <begin position="970"/>
        <end position="1001"/>
    </location>
</feature>
<feature type="region of interest" description="Disordered" evidence="3">
    <location>
        <begin position="1134"/>
        <end position="1155"/>
    </location>
</feature>
<feature type="compositionally biased region" description="Basic residues" evidence="3">
    <location>
        <begin position="976"/>
        <end position="988"/>
    </location>
</feature>
<feature type="compositionally biased region" description="Polar residues" evidence="3">
    <location>
        <begin position="992"/>
        <end position="1001"/>
    </location>
</feature>
<feature type="modified residue" description="Phosphoserine" evidence="9">
    <location>
        <position position="990"/>
    </location>
</feature>
<feature type="modified residue" description="Phosphoserine" evidence="9">
    <location>
        <position position="1004"/>
    </location>
</feature>
<feature type="modified residue" description="Phosphoserine" evidence="13">
    <location>
        <position position="1030"/>
    </location>
</feature>
<feature type="modified residue" description="Phosphoserine" evidence="13">
    <location>
        <position position="1033"/>
    </location>
</feature>
<feature type="modified residue" description="Phosphoserine" evidence="13">
    <location>
        <position position="1039"/>
    </location>
</feature>
<feature type="modified residue" description="Phosphoserine" evidence="9 10 11 12 13">
    <location>
        <position position="1045"/>
    </location>
</feature>
<feature type="modified residue" description="Phosphoserine" evidence="9">
    <location>
        <position position="1054"/>
    </location>
</feature>
<feature type="modified residue" description="Phosphoserine" evidence="12">
    <location>
        <position position="1083"/>
    </location>
</feature>
<feature type="modified residue" description="Phosphoserine" evidence="1">
    <location>
        <position position="1111"/>
    </location>
</feature>
<feature type="modified residue" description="Phosphoserine" evidence="10">
    <location>
        <position position="1113"/>
    </location>
</feature>
<feature type="modified residue" description="Phosphoserine" evidence="10">
    <location>
        <position position="1116"/>
    </location>
</feature>
<feature type="splice variant" id="VSP_023600" description="In isoform 3." evidence="7">
    <location>
        <begin position="1"/>
        <end position="1113"/>
    </location>
</feature>
<feature type="splice variant" id="VSP_023601" description="In isoform 3." evidence="7">
    <original>PVSPPVVDLRTIMEIEESRQKCGATPKSHLG</original>
    <variation>MLIDIISSKMISHGIKLCQKKPLKLIGLISS</variation>
    <location>
        <begin position="1114"/>
        <end position="1144"/>
    </location>
</feature>
<feature type="splice variant" id="VSP_023602" description="In isoform 2." evidence="7">
    <original>KTVSHGVKLSQKQRKMIALTTKENNSGMNSMETVLFTPSKAPKPVNAWASSL</original>
    <variation>WVENITKDHFMLYFCPKNWTDLLHLSYYFSAFDVIVNYTSFSGQFSLHNIIS</variation>
    <location>
        <begin position="1145"/>
        <end position="1196"/>
    </location>
</feature>
<feature type="splice variant" id="VSP_023604" description="In isoform 2." evidence="7">
    <location>
        <begin position="1197"/>
        <end position="1353"/>
    </location>
</feature>
<feature type="sequence variant" id="VAR_031106" description="In dbSNP:rs12662902.">
    <original>V</original>
    <variation>I</variation>
    <location>
        <position position="1065"/>
    </location>
</feature>
<feature type="sequence variant" id="VAR_031107" description="In dbSNP:rs9449444." evidence="4 5">
    <original>A</original>
    <variation>V</variation>
    <location>
        <position position="1185"/>
    </location>
</feature>
<feature type="sequence conflict" description="In Ref. 6; CAB43239." evidence="8" ref="6">
    <original>S</original>
    <variation>G</variation>
    <location>
        <position position="971"/>
    </location>
</feature>
<feature type="sequence conflict" description="In Ref. 6; CAB43239." evidence="8" ref="6">
    <original>H</original>
    <variation>R</variation>
    <location>
        <position position="1197"/>
    </location>
</feature>
<feature type="sequence conflict" description="In Ref. 6; CAB43239." evidence="8" ref="6">
    <original>H</original>
    <variation>L</variation>
    <location>
        <position position="1218"/>
    </location>
</feature>
<name>IBTK_HUMAN</name>
<protein>
    <recommendedName>
        <fullName>Inhibitor of Bruton tyrosine kinase</fullName>
        <shortName>IBtk</shortName>
    </recommendedName>
</protein>
<organism>
    <name type="scientific">Homo sapiens</name>
    <name type="common">Human</name>
    <dbReference type="NCBI Taxonomy" id="9606"/>
    <lineage>
        <taxon>Eukaryota</taxon>
        <taxon>Metazoa</taxon>
        <taxon>Chordata</taxon>
        <taxon>Craniata</taxon>
        <taxon>Vertebrata</taxon>
        <taxon>Euteleostomi</taxon>
        <taxon>Mammalia</taxon>
        <taxon>Eutheria</taxon>
        <taxon>Euarchontoglires</taxon>
        <taxon>Primates</taxon>
        <taxon>Haplorrhini</taxon>
        <taxon>Catarrhini</taxon>
        <taxon>Hominidae</taxon>
        <taxon>Homo</taxon>
    </lineage>
</organism>
<evidence type="ECO:0000250" key="1">
    <source>
        <dbReference type="UniProtKB" id="Q6ZPR6"/>
    </source>
</evidence>
<evidence type="ECO:0000255" key="2">
    <source>
        <dbReference type="PROSITE-ProRule" id="PRU00037"/>
    </source>
</evidence>
<evidence type="ECO:0000256" key="3">
    <source>
        <dbReference type="SAM" id="MobiDB-lite"/>
    </source>
</evidence>
<evidence type="ECO:0000269" key="4">
    <source>
    </source>
</evidence>
<evidence type="ECO:0000269" key="5">
    <source>
    </source>
</evidence>
<evidence type="ECO:0000269" key="6">
    <source>
    </source>
</evidence>
<evidence type="ECO:0000303" key="7">
    <source>
    </source>
</evidence>
<evidence type="ECO:0000305" key="8"/>
<evidence type="ECO:0007744" key="9">
    <source>
    </source>
</evidence>
<evidence type="ECO:0007744" key="10">
    <source>
    </source>
</evidence>
<evidence type="ECO:0007744" key="11">
    <source>
    </source>
</evidence>
<evidence type="ECO:0007744" key="12">
    <source>
    </source>
</evidence>
<evidence type="ECO:0007744" key="13">
    <source>
    </source>
</evidence>
<gene>
    <name type="primary">IBTK</name>
    <name type="synonym">BTKI</name>
    <name type="synonym">KIAA1417</name>
</gene>
<comment type="function">
    <text evidence="4">Acts as an inhibitor of BTK tyrosine kinase activity, thereby playing a role in B-cell development. Down-regulates BTK kinase activity, leading to interference with BTK-mediated calcium mobilization and NF-kappa-B-driven transcription.</text>
</comment>
<comment type="subunit">
    <text evidence="4 6">Interacts with the PH domain of BTK. Isoform 2 does not interact with BTK.</text>
</comment>
<comment type="subcellular location">
    <subcellularLocation>
        <location>Cytoplasm</location>
    </subcellularLocation>
    <subcellularLocation>
        <location>Membrane</location>
        <topology>Peripheral membrane protein</topology>
    </subcellularLocation>
    <text>Translocates to the plasma membrane upon IgM stimulation.</text>
</comment>
<comment type="subcellular location">
    <molecule>Isoform 2</molecule>
    <subcellularLocation>
        <location>Nucleus</location>
    </subcellularLocation>
</comment>
<comment type="alternative products">
    <event type="alternative splicing"/>
    <isoform>
        <id>Q9P2D0-1</id>
        <name>1</name>
        <name>IBtk-alpha</name>
        <sequence type="displayed"/>
    </isoform>
    <isoform>
        <id>Q9P2D0-2</id>
        <name>2</name>
        <name>IBtk-beta</name>
        <sequence type="described" ref="VSP_023602 VSP_023604"/>
    </isoform>
    <isoform>
        <id>Q9P2D0-3</id>
        <name>3</name>
        <name>IBtk-gamma</name>
        <sequence type="described" ref="VSP_023600 VSP_023601"/>
    </isoform>
</comment>
<comment type="tissue specificity">
    <text evidence="4 6">Expressed in DeFew, HEK293T, HeLa and in Jurkat, MC3 and NB4 lymphoid cells (at protein level). Isoform 1 is the predominant isoform expressed in all examined tissues and cell lines. Highly expressed in hemopoietic tissues (fetal liver, spleen, lymph node, thymus, peripheral blood leukocytes and bone marrow). Weakly or not expressed in other tissues.</text>
</comment>
<comment type="miscellaneous">
    <molecule>Isoform 2</molecule>
    <text evidence="8">Due to a partial intron retention.</text>
</comment>
<comment type="miscellaneous">
    <molecule>Isoform 3</molecule>
    <text evidence="8">Due to a partial intron retention.</text>
</comment>
<comment type="sequence caution" evidence="8">
    <conflict type="miscellaneous discrepancy">
        <sequence resource="EMBL-CDS" id="AAG27170"/>
    </conflict>
    <text>Aberrant splicing.</text>
</comment>
<comment type="sequence caution" evidence="8">
    <conflict type="erroneous initiation">
        <sequence resource="EMBL-CDS" id="BAA92655"/>
    </conflict>
</comment>
<dbReference type="EMBL" id="DQ005633">
    <property type="protein sequence ID" value="AAY55906.1"/>
    <property type="molecule type" value="mRNA"/>
</dbReference>
<dbReference type="EMBL" id="DQ005634">
    <property type="protein sequence ID" value="AAY55907.1"/>
    <property type="molecule type" value="mRNA"/>
</dbReference>
<dbReference type="EMBL" id="DQ005635">
    <property type="protein sequence ID" value="AAY55908.1"/>
    <property type="molecule type" value="mRNA"/>
</dbReference>
<dbReference type="EMBL" id="AB037838">
    <property type="protein sequence ID" value="BAA92655.2"/>
    <property type="status" value="ALT_INIT"/>
    <property type="molecule type" value="mRNA"/>
</dbReference>
<dbReference type="EMBL" id="AL050333">
    <property type="status" value="NOT_ANNOTATED_CDS"/>
    <property type="molecule type" value="Genomic_DNA"/>
</dbReference>
<dbReference type="EMBL" id="BC027490">
    <property type="protein sequence ID" value="AAH27490.1"/>
    <property type="molecule type" value="mRNA"/>
</dbReference>
<dbReference type="EMBL" id="BC038244">
    <property type="protein sequence ID" value="AAH38244.2"/>
    <property type="molecule type" value="mRNA"/>
</dbReference>
<dbReference type="EMBL" id="BC042171">
    <property type="protein sequence ID" value="AAH42171.2"/>
    <property type="molecule type" value="mRNA"/>
</dbReference>
<dbReference type="EMBL" id="BC113696">
    <property type="protein sequence ID" value="AAI13697.1"/>
    <property type="molecule type" value="mRNA"/>
</dbReference>
<dbReference type="EMBL" id="BC113698">
    <property type="protein sequence ID" value="AAI13699.1"/>
    <property type="molecule type" value="mRNA"/>
</dbReference>
<dbReference type="EMBL" id="AL050018">
    <property type="protein sequence ID" value="CAB43239.1"/>
    <property type="molecule type" value="mRNA"/>
</dbReference>
<dbReference type="EMBL" id="AF235049">
    <property type="protein sequence ID" value="AAG27170.1"/>
    <property type="status" value="ALT_SEQ"/>
    <property type="molecule type" value="mRNA"/>
</dbReference>
<dbReference type="CCDS" id="CCDS34490.1">
    <molecule id="Q9P2D0-1"/>
</dbReference>
<dbReference type="PIR" id="T08705">
    <property type="entry name" value="T08705"/>
</dbReference>
<dbReference type="RefSeq" id="NP_001287835.1">
    <property type="nucleotide sequence ID" value="NM_001300906.1"/>
</dbReference>
<dbReference type="RefSeq" id="NP_056340.2">
    <molecule id="Q9P2D0-1"/>
    <property type="nucleotide sequence ID" value="NM_015525.3"/>
</dbReference>
<dbReference type="SMR" id="Q9P2D0"/>
<dbReference type="BioGRID" id="117474">
    <property type="interactions" value="138"/>
</dbReference>
<dbReference type="FunCoup" id="Q9P2D0">
    <property type="interactions" value="1972"/>
</dbReference>
<dbReference type="IntAct" id="Q9P2D0">
    <property type="interactions" value="62"/>
</dbReference>
<dbReference type="MINT" id="Q9P2D0"/>
<dbReference type="STRING" id="9606.ENSP00000305721"/>
<dbReference type="GlyGen" id="Q9P2D0">
    <property type="glycosylation" value="3 sites, 2 N-linked glycans (2 sites), 1 O-linked glycan (1 site)"/>
</dbReference>
<dbReference type="iPTMnet" id="Q9P2D0"/>
<dbReference type="PhosphoSitePlus" id="Q9P2D0"/>
<dbReference type="BioMuta" id="IBTK"/>
<dbReference type="DMDM" id="134034141"/>
<dbReference type="jPOST" id="Q9P2D0"/>
<dbReference type="MassIVE" id="Q9P2D0"/>
<dbReference type="PaxDb" id="9606-ENSP00000305721"/>
<dbReference type="PeptideAtlas" id="Q9P2D0"/>
<dbReference type="ProteomicsDB" id="83770">
    <molecule id="Q9P2D0-1"/>
</dbReference>
<dbReference type="ProteomicsDB" id="83771">
    <molecule id="Q9P2D0-2"/>
</dbReference>
<dbReference type="ProteomicsDB" id="83772">
    <molecule id="Q9P2D0-3"/>
</dbReference>
<dbReference type="Pumba" id="Q9P2D0"/>
<dbReference type="Antibodypedia" id="18465">
    <property type="antibodies" value="127 antibodies from 24 providers"/>
</dbReference>
<dbReference type="DNASU" id="25998"/>
<dbReference type="Ensembl" id="ENST00000306270.12">
    <molecule id="Q9P2D0-1"/>
    <property type="protein sequence ID" value="ENSP00000305721.7"/>
    <property type="gene ID" value="ENSG00000005700.15"/>
</dbReference>
<dbReference type="Ensembl" id="ENST00000635454.2">
    <molecule id="Q9P2D0-1"/>
    <property type="protein sequence ID" value="ENSP00000489389.1"/>
    <property type="gene ID" value="ENSG00000283068.2"/>
</dbReference>
<dbReference type="GeneID" id="25998"/>
<dbReference type="KEGG" id="hsa:25998"/>
<dbReference type="MANE-Select" id="ENST00000306270.12">
    <property type="protein sequence ID" value="ENSP00000305721.7"/>
    <property type="RefSeq nucleotide sequence ID" value="NM_015525.4"/>
    <property type="RefSeq protein sequence ID" value="NP_056340.2"/>
</dbReference>
<dbReference type="UCSC" id="uc003pjl.2">
    <molecule id="Q9P2D0-1"/>
    <property type="organism name" value="human"/>
</dbReference>
<dbReference type="AGR" id="HGNC:17853"/>
<dbReference type="CTD" id="25998"/>
<dbReference type="DisGeNET" id="25998"/>
<dbReference type="GeneCards" id="IBTK"/>
<dbReference type="HGNC" id="HGNC:17853">
    <property type="gene designation" value="IBTK"/>
</dbReference>
<dbReference type="HPA" id="ENSG00000005700">
    <property type="expression patterns" value="Low tissue specificity"/>
</dbReference>
<dbReference type="MIM" id="606457">
    <property type="type" value="gene"/>
</dbReference>
<dbReference type="neXtProt" id="NX_Q9P2D0"/>
<dbReference type="OpenTargets" id="ENSG00000005700"/>
<dbReference type="PharmGKB" id="PA134898277"/>
<dbReference type="VEuPathDB" id="HostDB:ENSG00000005700"/>
<dbReference type="eggNOG" id="KOG0783">
    <property type="taxonomic scope" value="Eukaryota"/>
</dbReference>
<dbReference type="GeneTree" id="ENSGT00940000156277"/>
<dbReference type="InParanoid" id="Q9P2D0"/>
<dbReference type="OMA" id="CGINTDH"/>
<dbReference type="OrthoDB" id="1893551at2759"/>
<dbReference type="PAN-GO" id="Q9P2D0">
    <property type="GO annotations" value="5 GO annotations based on evolutionary models"/>
</dbReference>
<dbReference type="PhylomeDB" id="Q9P2D0"/>
<dbReference type="TreeFam" id="TF323747"/>
<dbReference type="PathwayCommons" id="Q9P2D0"/>
<dbReference type="SignaLink" id="Q9P2D0"/>
<dbReference type="SIGNOR" id="Q9P2D0"/>
<dbReference type="BioGRID-ORCS" id="25998">
    <property type="hits" value="11 hits in 1201 CRISPR screens"/>
</dbReference>
<dbReference type="CD-CODE" id="232F8A39">
    <property type="entry name" value="P-body"/>
</dbReference>
<dbReference type="CD-CODE" id="DEE660B4">
    <property type="entry name" value="Stress granule"/>
</dbReference>
<dbReference type="ChiTaRS" id="IBTK">
    <property type="organism name" value="human"/>
</dbReference>
<dbReference type="GenomeRNAi" id="25998"/>
<dbReference type="Pharos" id="Q9P2D0">
    <property type="development level" value="Tbio"/>
</dbReference>
<dbReference type="PRO" id="PR:Q9P2D0"/>
<dbReference type="Proteomes" id="UP000005640">
    <property type="component" value="Chromosome 6"/>
</dbReference>
<dbReference type="RNAct" id="Q9P2D0">
    <property type="molecule type" value="protein"/>
</dbReference>
<dbReference type="Bgee" id="ENSG00000005700">
    <property type="expression patterns" value="Expressed in adrenal tissue and 104 other cell types or tissues"/>
</dbReference>
<dbReference type="ExpressionAtlas" id="Q9P2D0">
    <property type="expression patterns" value="baseline and differential"/>
</dbReference>
<dbReference type="GO" id="GO:0005737">
    <property type="term" value="C:cytoplasm"/>
    <property type="evidence" value="ECO:0000314"/>
    <property type="project" value="MGI"/>
</dbReference>
<dbReference type="GO" id="GO:0016020">
    <property type="term" value="C:membrane"/>
    <property type="evidence" value="ECO:0007669"/>
    <property type="project" value="UniProtKB-SubCell"/>
</dbReference>
<dbReference type="GO" id="GO:0005654">
    <property type="term" value="C:nucleoplasm"/>
    <property type="evidence" value="ECO:0000314"/>
    <property type="project" value="HPA"/>
</dbReference>
<dbReference type="GO" id="GO:0019901">
    <property type="term" value="F:protein kinase binding"/>
    <property type="evidence" value="ECO:0000314"/>
    <property type="project" value="MGI"/>
</dbReference>
<dbReference type="GO" id="GO:0030292">
    <property type="term" value="F:protein tyrosine kinase inhibitor activity"/>
    <property type="evidence" value="ECO:0000314"/>
    <property type="project" value="MGI"/>
</dbReference>
<dbReference type="GO" id="GO:0001933">
    <property type="term" value="P:negative regulation of protein phosphorylation"/>
    <property type="evidence" value="ECO:0000314"/>
    <property type="project" value="MGI"/>
</dbReference>
<dbReference type="GO" id="GO:0051209">
    <property type="term" value="P:release of sequestered calcium ion into cytosol"/>
    <property type="evidence" value="ECO:0000314"/>
    <property type="project" value="MGI"/>
</dbReference>
<dbReference type="CDD" id="cd18500">
    <property type="entry name" value="BACK_IBtk"/>
    <property type="match status" value="1"/>
</dbReference>
<dbReference type="CDD" id="cd18301">
    <property type="entry name" value="BTB1_POZ_IBtk"/>
    <property type="match status" value="1"/>
</dbReference>
<dbReference type="CDD" id="cd18302">
    <property type="entry name" value="BTB2_POZ_IBtk"/>
    <property type="match status" value="1"/>
</dbReference>
<dbReference type="FunFam" id="1.25.40.20:FF:000090">
    <property type="entry name" value="inhibitor of Bruton tyrosine kinase isoform X1"/>
    <property type="match status" value="1"/>
</dbReference>
<dbReference type="FunFam" id="3.30.710.10:FF:000105">
    <property type="entry name" value="inhibitor of Bruton tyrosine kinase isoform X1"/>
    <property type="match status" value="1"/>
</dbReference>
<dbReference type="FunFam" id="2.130.10.30:FF:000011">
    <property type="entry name" value="inhibitor of Bruton tyrosine kinase isoform X2"/>
    <property type="match status" value="1"/>
</dbReference>
<dbReference type="Gene3D" id="1.25.40.20">
    <property type="entry name" value="Ankyrin repeat-containing domain"/>
    <property type="match status" value="1"/>
</dbReference>
<dbReference type="Gene3D" id="3.30.710.10">
    <property type="entry name" value="Potassium Channel Kv1.1, Chain A"/>
    <property type="match status" value="2"/>
</dbReference>
<dbReference type="Gene3D" id="2.130.10.30">
    <property type="entry name" value="Regulator of chromosome condensation 1/beta-lactamase-inhibitor protein II"/>
    <property type="match status" value="1"/>
</dbReference>
<dbReference type="InterPro" id="IPR002110">
    <property type="entry name" value="Ankyrin_rpt"/>
</dbReference>
<dbReference type="InterPro" id="IPR036770">
    <property type="entry name" value="Ankyrin_rpt-contain_sf"/>
</dbReference>
<dbReference type="InterPro" id="IPR000210">
    <property type="entry name" value="BTB/POZ_dom"/>
</dbReference>
<dbReference type="InterPro" id="IPR009091">
    <property type="entry name" value="RCC1/BLIP-II"/>
</dbReference>
<dbReference type="InterPro" id="IPR000408">
    <property type="entry name" value="Reg_chr_condens"/>
</dbReference>
<dbReference type="InterPro" id="IPR051625">
    <property type="entry name" value="Signaling_Regulatory_Domain"/>
</dbReference>
<dbReference type="InterPro" id="IPR011333">
    <property type="entry name" value="SKP1/BTB/POZ_sf"/>
</dbReference>
<dbReference type="PANTHER" id="PTHR22872">
    <property type="entry name" value="BTK-BINDING PROTEIN-RELATED"/>
    <property type="match status" value="1"/>
</dbReference>
<dbReference type="PANTHER" id="PTHR22872:SF2">
    <property type="entry name" value="INHIBITOR OF BRUTON TYROSINE KINASE"/>
    <property type="match status" value="1"/>
</dbReference>
<dbReference type="Pfam" id="PF12796">
    <property type="entry name" value="Ank_2"/>
    <property type="match status" value="1"/>
</dbReference>
<dbReference type="Pfam" id="PF00651">
    <property type="entry name" value="BTB"/>
    <property type="match status" value="2"/>
</dbReference>
<dbReference type="Pfam" id="PF00415">
    <property type="entry name" value="RCC1"/>
    <property type="match status" value="3"/>
</dbReference>
<dbReference type="SMART" id="SM00248">
    <property type="entry name" value="ANK"/>
    <property type="match status" value="2"/>
</dbReference>
<dbReference type="SMART" id="SM00225">
    <property type="entry name" value="BTB"/>
    <property type="match status" value="2"/>
</dbReference>
<dbReference type="SUPFAM" id="SSF48403">
    <property type="entry name" value="Ankyrin repeat"/>
    <property type="match status" value="1"/>
</dbReference>
<dbReference type="SUPFAM" id="SSF54695">
    <property type="entry name" value="POZ domain"/>
    <property type="match status" value="2"/>
</dbReference>
<dbReference type="SUPFAM" id="SSF50985">
    <property type="entry name" value="RCC1/BLIP-II"/>
    <property type="match status" value="1"/>
</dbReference>
<dbReference type="PROSITE" id="PS50297">
    <property type="entry name" value="ANK_REP_REGION"/>
    <property type="match status" value="1"/>
</dbReference>
<dbReference type="PROSITE" id="PS50088">
    <property type="entry name" value="ANK_REPEAT"/>
    <property type="match status" value="2"/>
</dbReference>
<dbReference type="PROSITE" id="PS50097">
    <property type="entry name" value="BTB"/>
    <property type="match status" value="2"/>
</dbReference>
<dbReference type="PROSITE" id="PS50012">
    <property type="entry name" value="RCC1_3"/>
    <property type="match status" value="3"/>
</dbReference>